<comment type="function">
    <text evidence="1">Regulator of type 1 phosphatases which maintains protein phosphatase activity under strict control.</text>
</comment>
<comment type="subcellular location">
    <subcellularLocation>
        <location evidence="1">Nucleus</location>
    </subcellularLocation>
</comment>
<comment type="similarity">
    <text evidence="3">Belongs to the YPI1 family.</text>
</comment>
<keyword id="KW-0539">Nucleus</keyword>
<keyword id="KW-1185">Reference proteome</keyword>
<gene>
    <name type="primary">YPI1</name>
    <name type="ORF">PGUG_04992</name>
</gene>
<protein>
    <recommendedName>
        <fullName>Type 1 phosphatases regulator YPI1</fullName>
    </recommendedName>
</protein>
<organism>
    <name type="scientific">Meyerozyma guilliermondii (strain ATCC 6260 / CBS 566 / DSM 6381 / JCM 1539 / NBRC 10279 / NRRL Y-324)</name>
    <name type="common">Yeast</name>
    <name type="synonym">Candida guilliermondii</name>
    <dbReference type="NCBI Taxonomy" id="294746"/>
    <lineage>
        <taxon>Eukaryota</taxon>
        <taxon>Fungi</taxon>
        <taxon>Dikarya</taxon>
        <taxon>Ascomycota</taxon>
        <taxon>Saccharomycotina</taxon>
        <taxon>Pichiomycetes</taxon>
        <taxon>Debaryomycetaceae</taxon>
        <taxon>Meyerozyma</taxon>
    </lineage>
</organism>
<name>YPI1_PICGU</name>
<dbReference type="EMBL" id="CH408160">
    <property type="protein sequence ID" value="EDK40894.2"/>
    <property type="molecule type" value="Genomic_DNA"/>
</dbReference>
<dbReference type="RefSeq" id="XP_001483037.1">
    <property type="nucleotide sequence ID" value="XM_001482987.1"/>
</dbReference>
<dbReference type="SMR" id="A5DNZ1"/>
<dbReference type="STRING" id="294746.A5DNZ1"/>
<dbReference type="GeneID" id="5124850"/>
<dbReference type="KEGG" id="pgu:PGUG_04992"/>
<dbReference type="VEuPathDB" id="FungiDB:PGUG_04992"/>
<dbReference type="eggNOG" id="KOG4102">
    <property type="taxonomic scope" value="Eukaryota"/>
</dbReference>
<dbReference type="HOGENOM" id="CLU_098333_3_0_1"/>
<dbReference type="InParanoid" id="A5DNZ1"/>
<dbReference type="OrthoDB" id="307488at2759"/>
<dbReference type="Proteomes" id="UP000001997">
    <property type="component" value="Unassembled WGS sequence"/>
</dbReference>
<dbReference type="GO" id="GO:0005634">
    <property type="term" value="C:nucleus"/>
    <property type="evidence" value="ECO:0007669"/>
    <property type="project" value="UniProtKB-SubCell"/>
</dbReference>
<dbReference type="GO" id="GO:0000164">
    <property type="term" value="C:protein phosphatase type 1 complex"/>
    <property type="evidence" value="ECO:0007669"/>
    <property type="project" value="EnsemblFungi"/>
</dbReference>
<dbReference type="GO" id="GO:0008157">
    <property type="term" value="F:protein phosphatase 1 binding"/>
    <property type="evidence" value="ECO:0007669"/>
    <property type="project" value="TreeGrafter"/>
</dbReference>
<dbReference type="GO" id="GO:0072542">
    <property type="term" value="F:protein phosphatase activator activity"/>
    <property type="evidence" value="ECO:0007669"/>
    <property type="project" value="EnsemblFungi"/>
</dbReference>
<dbReference type="GO" id="GO:0004865">
    <property type="term" value="F:protein serine/threonine phosphatase inhibitor activity"/>
    <property type="evidence" value="ECO:0007669"/>
    <property type="project" value="EnsemblFungi"/>
</dbReference>
<dbReference type="GO" id="GO:0005977">
    <property type="term" value="P:glycogen metabolic process"/>
    <property type="evidence" value="ECO:0007669"/>
    <property type="project" value="EnsemblFungi"/>
</dbReference>
<dbReference type="GO" id="GO:0006873">
    <property type="term" value="P:intracellular monoatomic ion homeostasis"/>
    <property type="evidence" value="ECO:0007669"/>
    <property type="project" value="EnsemblFungi"/>
</dbReference>
<dbReference type="GO" id="GO:0007094">
    <property type="term" value="P:mitotic spindle assembly checkpoint signaling"/>
    <property type="evidence" value="ECO:0007669"/>
    <property type="project" value="EnsemblFungi"/>
</dbReference>
<dbReference type="GO" id="GO:1900180">
    <property type="term" value="P:regulation of protein localization to nucleus"/>
    <property type="evidence" value="ECO:0007669"/>
    <property type="project" value="EnsemblFungi"/>
</dbReference>
<dbReference type="InterPro" id="IPR011107">
    <property type="entry name" value="PPI_Ypi1"/>
</dbReference>
<dbReference type="PANTHER" id="PTHR20835:SF0">
    <property type="entry name" value="E3 UBIQUITIN-PROTEIN LIGASE PPP1R11"/>
    <property type="match status" value="1"/>
</dbReference>
<dbReference type="PANTHER" id="PTHR20835">
    <property type="entry name" value="E3 UBIQUITIN-PROTEIN LIGASE PPP1R11-RELATED"/>
    <property type="match status" value="1"/>
</dbReference>
<dbReference type="Pfam" id="PF07491">
    <property type="entry name" value="PPI_Ypi1"/>
    <property type="match status" value="1"/>
</dbReference>
<feature type="chain" id="PRO_0000333482" description="Type 1 phosphatases regulator YPI1">
    <location>
        <begin position="1"/>
        <end position="117"/>
    </location>
</feature>
<feature type="region of interest" description="Disordered" evidence="2">
    <location>
        <begin position="1"/>
        <end position="61"/>
    </location>
</feature>
<feature type="region of interest" description="Disordered" evidence="2">
    <location>
        <begin position="73"/>
        <end position="117"/>
    </location>
</feature>
<feature type="compositionally biased region" description="Polar residues" evidence="2">
    <location>
        <begin position="1"/>
        <end position="13"/>
    </location>
</feature>
<feature type="compositionally biased region" description="Low complexity" evidence="2">
    <location>
        <begin position="14"/>
        <end position="27"/>
    </location>
</feature>
<feature type="compositionally biased region" description="Basic residues" evidence="2">
    <location>
        <begin position="33"/>
        <end position="44"/>
    </location>
</feature>
<feature type="compositionally biased region" description="Basic and acidic residues" evidence="2">
    <location>
        <begin position="47"/>
        <end position="57"/>
    </location>
</feature>
<feature type="compositionally biased region" description="Low complexity" evidence="2">
    <location>
        <begin position="76"/>
        <end position="92"/>
    </location>
</feature>
<sequence length="117" mass="13089">MAQQGSSQMRPQGTSSVTQTTTETSASPILHLRPSKRKSKKKPSVRWTEDTVDNEHMNKKKTKICCIFHPQRQFDDGSSCESCSSSDSSSDGSDTEDSKPNAYEHQPHYKNQSKVPQ</sequence>
<reference key="1">
    <citation type="journal article" date="2009" name="Nature">
        <title>Evolution of pathogenicity and sexual reproduction in eight Candida genomes.</title>
        <authorList>
            <person name="Butler G."/>
            <person name="Rasmussen M.D."/>
            <person name="Lin M.F."/>
            <person name="Santos M.A.S."/>
            <person name="Sakthikumar S."/>
            <person name="Munro C.A."/>
            <person name="Rheinbay E."/>
            <person name="Grabherr M."/>
            <person name="Forche A."/>
            <person name="Reedy J.L."/>
            <person name="Agrafioti I."/>
            <person name="Arnaud M.B."/>
            <person name="Bates S."/>
            <person name="Brown A.J.P."/>
            <person name="Brunke S."/>
            <person name="Costanzo M.C."/>
            <person name="Fitzpatrick D.A."/>
            <person name="de Groot P.W.J."/>
            <person name="Harris D."/>
            <person name="Hoyer L.L."/>
            <person name="Hube B."/>
            <person name="Klis F.M."/>
            <person name="Kodira C."/>
            <person name="Lennard N."/>
            <person name="Logue M.E."/>
            <person name="Martin R."/>
            <person name="Neiman A.M."/>
            <person name="Nikolaou E."/>
            <person name="Quail M.A."/>
            <person name="Quinn J."/>
            <person name="Santos M.C."/>
            <person name="Schmitzberger F.F."/>
            <person name="Sherlock G."/>
            <person name="Shah P."/>
            <person name="Silverstein K.A.T."/>
            <person name="Skrzypek M.S."/>
            <person name="Soll D."/>
            <person name="Staggs R."/>
            <person name="Stansfield I."/>
            <person name="Stumpf M.P.H."/>
            <person name="Sudbery P.E."/>
            <person name="Srikantha T."/>
            <person name="Zeng Q."/>
            <person name="Berman J."/>
            <person name="Berriman M."/>
            <person name="Heitman J."/>
            <person name="Gow N.A.R."/>
            <person name="Lorenz M.C."/>
            <person name="Birren B.W."/>
            <person name="Kellis M."/>
            <person name="Cuomo C.A."/>
        </authorList>
    </citation>
    <scope>NUCLEOTIDE SEQUENCE [LARGE SCALE GENOMIC DNA]</scope>
    <source>
        <strain>ATCC 6260 / CBS 566 / DSM 6381 / JCM 1539 / NBRC 10279 / NRRL Y-324</strain>
    </source>
</reference>
<accession>A5DNZ1</accession>
<proteinExistence type="inferred from homology"/>
<evidence type="ECO:0000250" key="1"/>
<evidence type="ECO:0000256" key="2">
    <source>
        <dbReference type="SAM" id="MobiDB-lite"/>
    </source>
</evidence>
<evidence type="ECO:0000305" key="3"/>